<feature type="chain" id="PRO_1000004164" description="Large ribosomal subunit protein bL33">
    <location>
        <begin position="1"/>
        <end position="55"/>
    </location>
</feature>
<comment type="similarity">
    <text evidence="1">Belongs to the bacterial ribosomal protein bL33 family.</text>
</comment>
<gene>
    <name evidence="1" type="primary">rpmG</name>
    <name type="ordered locus">ECP_3734</name>
</gene>
<protein>
    <recommendedName>
        <fullName evidence="1">Large ribosomal subunit protein bL33</fullName>
    </recommendedName>
    <alternativeName>
        <fullName evidence="2">50S ribosomal protein L33</fullName>
    </alternativeName>
</protein>
<name>RL33_ECOL5</name>
<evidence type="ECO:0000255" key="1">
    <source>
        <dbReference type="HAMAP-Rule" id="MF_00294"/>
    </source>
</evidence>
<evidence type="ECO:0000305" key="2"/>
<organism>
    <name type="scientific">Escherichia coli O6:K15:H31 (strain 536 / UPEC)</name>
    <dbReference type="NCBI Taxonomy" id="362663"/>
    <lineage>
        <taxon>Bacteria</taxon>
        <taxon>Pseudomonadati</taxon>
        <taxon>Pseudomonadota</taxon>
        <taxon>Gammaproteobacteria</taxon>
        <taxon>Enterobacterales</taxon>
        <taxon>Enterobacteriaceae</taxon>
        <taxon>Escherichia</taxon>
    </lineage>
</organism>
<accession>Q0TBH3</accession>
<reference key="1">
    <citation type="journal article" date="2006" name="Mol. Microbiol.">
        <title>Role of pathogenicity island-associated integrases in the genome plasticity of uropathogenic Escherichia coli strain 536.</title>
        <authorList>
            <person name="Hochhut B."/>
            <person name="Wilde C."/>
            <person name="Balling G."/>
            <person name="Middendorf B."/>
            <person name="Dobrindt U."/>
            <person name="Brzuszkiewicz E."/>
            <person name="Gottschalk G."/>
            <person name="Carniel E."/>
            <person name="Hacker J."/>
        </authorList>
    </citation>
    <scope>NUCLEOTIDE SEQUENCE [LARGE SCALE GENOMIC DNA]</scope>
    <source>
        <strain>536 / UPEC</strain>
    </source>
</reference>
<proteinExistence type="inferred from homology"/>
<sequence length="55" mass="6372">MAKGIREKIKLVSSAGTGHFYTTTKNKRTKPEKLELKKFDPVVRQHVIYKEAKIK</sequence>
<dbReference type="EMBL" id="CP000247">
    <property type="protein sequence ID" value="ABG71706.1"/>
    <property type="molecule type" value="Genomic_DNA"/>
</dbReference>
<dbReference type="RefSeq" id="WP_001051798.1">
    <property type="nucleotide sequence ID" value="NC_008253.1"/>
</dbReference>
<dbReference type="SMR" id="Q0TBH3"/>
<dbReference type="GeneID" id="97607673"/>
<dbReference type="KEGG" id="ecp:ECP_3734"/>
<dbReference type="HOGENOM" id="CLU_190949_1_1_6"/>
<dbReference type="Proteomes" id="UP000009182">
    <property type="component" value="Chromosome"/>
</dbReference>
<dbReference type="GO" id="GO:0022625">
    <property type="term" value="C:cytosolic large ribosomal subunit"/>
    <property type="evidence" value="ECO:0007669"/>
    <property type="project" value="TreeGrafter"/>
</dbReference>
<dbReference type="GO" id="GO:0003735">
    <property type="term" value="F:structural constituent of ribosome"/>
    <property type="evidence" value="ECO:0007669"/>
    <property type="project" value="InterPro"/>
</dbReference>
<dbReference type="GO" id="GO:0006412">
    <property type="term" value="P:translation"/>
    <property type="evidence" value="ECO:0007669"/>
    <property type="project" value="UniProtKB-UniRule"/>
</dbReference>
<dbReference type="FunFam" id="2.20.28.120:FF:000001">
    <property type="entry name" value="50S ribosomal protein L33"/>
    <property type="match status" value="1"/>
</dbReference>
<dbReference type="Gene3D" id="2.20.28.120">
    <property type="entry name" value="Ribosomal protein L33"/>
    <property type="match status" value="1"/>
</dbReference>
<dbReference type="HAMAP" id="MF_00294">
    <property type="entry name" value="Ribosomal_bL33"/>
    <property type="match status" value="1"/>
</dbReference>
<dbReference type="InterPro" id="IPR001705">
    <property type="entry name" value="Ribosomal_bL33"/>
</dbReference>
<dbReference type="InterPro" id="IPR018264">
    <property type="entry name" value="Ribosomal_bL33_CS"/>
</dbReference>
<dbReference type="InterPro" id="IPR038584">
    <property type="entry name" value="Ribosomal_bL33_sf"/>
</dbReference>
<dbReference type="InterPro" id="IPR011332">
    <property type="entry name" value="Ribosomal_zn-bd"/>
</dbReference>
<dbReference type="NCBIfam" id="NF001860">
    <property type="entry name" value="PRK00595.1"/>
    <property type="match status" value="1"/>
</dbReference>
<dbReference type="NCBIfam" id="TIGR01023">
    <property type="entry name" value="rpmG_bact"/>
    <property type="match status" value="1"/>
</dbReference>
<dbReference type="PANTHER" id="PTHR15238">
    <property type="entry name" value="54S RIBOSOMAL PROTEIN L39, MITOCHONDRIAL"/>
    <property type="match status" value="1"/>
</dbReference>
<dbReference type="PANTHER" id="PTHR15238:SF1">
    <property type="entry name" value="LARGE RIBOSOMAL SUBUNIT PROTEIN BL33M"/>
    <property type="match status" value="1"/>
</dbReference>
<dbReference type="Pfam" id="PF00471">
    <property type="entry name" value="Ribosomal_L33"/>
    <property type="match status" value="1"/>
</dbReference>
<dbReference type="SUPFAM" id="SSF57829">
    <property type="entry name" value="Zn-binding ribosomal proteins"/>
    <property type="match status" value="1"/>
</dbReference>
<dbReference type="PROSITE" id="PS00582">
    <property type="entry name" value="RIBOSOMAL_L33"/>
    <property type="match status" value="1"/>
</dbReference>
<keyword id="KW-0687">Ribonucleoprotein</keyword>
<keyword id="KW-0689">Ribosomal protein</keyword>